<reference key="1">
    <citation type="journal article" date="2008" name="PLoS ONE">
        <title>Genetic basis of virulence attenuation revealed by comparative genomic analysis of Mycobacterium tuberculosis strain H37Ra versus H37Rv.</title>
        <authorList>
            <person name="Zheng H."/>
            <person name="Lu L."/>
            <person name="Wang B."/>
            <person name="Pu S."/>
            <person name="Zhang X."/>
            <person name="Zhu G."/>
            <person name="Shi W."/>
            <person name="Zhang L."/>
            <person name="Wang H."/>
            <person name="Wang S."/>
            <person name="Zhao G."/>
            <person name="Zhang Y."/>
        </authorList>
    </citation>
    <scope>NUCLEOTIDE SEQUENCE [LARGE SCALE GENOMIC DNA]</scope>
    <source>
        <strain>ATCC 25177 / H37Ra</strain>
    </source>
</reference>
<feature type="chain" id="PRO_1000058859" description="Adenylate kinase">
    <location>
        <begin position="1"/>
        <end position="181"/>
    </location>
</feature>
<feature type="region of interest" description="NMP" evidence="1">
    <location>
        <begin position="30"/>
        <end position="59"/>
    </location>
</feature>
<feature type="region of interest" description="LID" evidence="1">
    <location>
        <begin position="126"/>
        <end position="132"/>
    </location>
</feature>
<feature type="binding site" evidence="1">
    <location>
        <begin position="10"/>
        <end position="15"/>
    </location>
    <ligand>
        <name>ATP</name>
        <dbReference type="ChEBI" id="CHEBI:30616"/>
    </ligand>
</feature>
<feature type="binding site" evidence="1">
    <location>
        <position position="31"/>
    </location>
    <ligand>
        <name>AMP</name>
        <dbReference type="ChEBI" id="CHEBI:456215"/>
    </ligand>
</feature>
<feature type="binding site" evidence="1">
    <location>
        <position position="36"/>
    </location>
    <ligand>
        <name>AMP</name>
        <dbReference type="ChEBI" id="CHEBI:456215"/>
    </ligand>
</feature>
<feature type="binding site" evidence="1">
    <location>
        <begin position="57"/>
        <end position="59"/>
    </location>
    <ligand>
        <name>AMP</name>
        <dbReference type="ChEBI" id="CHEBI:456215"/>
    </ligand>
</feature>
<feature type="binding site" evidence="1">
    <location>
        <begin position="85"/>
        <end position="88"/>
    </location>
    <ligand>
        <name>AMP</name>
        <dbReference type="ChEBI" id="CHEBI:456215"/>
    </ligand>
</feature>
<feature type="binding site" evidence="1">
    <location>
        <position position="92"/>
    </location>
    <ligand>
        <name>AMP</name>
        <dbReference type="ChEBI" id="CHEBI:456215"/>
    </ligand>
</feature>
<feature type="binding site" evidence="1">
    <location>
        <position position="127"/>
    </location>
    <ligand>
        <name>ATP</name>
        <dbReference type="ChEBI" id="CHEBI:30616"/>
    </ligand>
</feature>
<feature type="binding site" evidence="1">
    <location>
        <position position="129"/>
    </location>
    <ligand>
        <name>AMP</name>
        <dbReference type="ChEBI" id="CHEBI:456215"/>
    </ligand>
</feature>
<feature type="binding site" evidence="1">
    <location>
        <position position="140"/>
    </location>
    <ligand>
        <name>AMP</name>
        <dbReference type="ChEBI" id="CHEBI:456215"/>
    </ligand>
</feature>
<feature type="binding site" evidence="1">
    <location>
        <position position="166"/>
    </location>
    <ligand>
        <name>ATP</name>
        <dbReference type="ChEBI" id="CHEBI:30616"/>
    </ligand>
</feature>
<dbReference type="EC" id="2.7.4.3" evidence="1"/>
<dbReference type="EMBL" id="CP000611">
    <property type="protein sequence ID" value="ABQ72469.1"/>
    <property type="molecule type" value="Genomic_DNA"/>
</dbReference>
<dbReference type="RefSeq" id="WP_003403726.1">
    <property type="nucleotide sequence ID" value="NZ_CP016972.1"/>
</dbReference>
<dbReference type="BMRB" id="A5U0B9"/>
<dbReference type="SMR" id="A5U0B9"/>
<dbReference type="KEGG" id="mra:MRA_0741"/>
<dbReference type="eggNOG" id="COG0563">
    <property type="taxonomic scope" value="Bacteria"/>
</dbReference>
<dbReference type="HOGENOM" id="CLU_032354_4_1_11"/>
<dbReference type="UniPathway" id="UPA00588">
    <property type="reaction ID" value="UER00649"/>
</dbReference>
<dbReference type="Proteomes" id="UP000001988">
    <property type="component" value="Chromosome"/>
</dbReference>
<dbReference type="GO" id="GO:0005737">
    <property type="term" value="C:cytoplasm"/>
    <property type="evidence" value="ECO:0007669"/>
    <property type="project" value="UniProtKB-SubCell"/>
</dbReference>
<dbReference type="GO" id="GO:0004017">
    <property type="term" value="F:adenylate kinase activity"/>
    <property type="evidence" value="ECO:0007669"/>
    <property type="project" value="UniProtKB-UniRule"/>
</dbReference>
<dbReference type="GO" id="GO:0005524">
    <property type="term" value="F:ATP binding"/>
    <property type="evidence" value="ECO:0007669"/>
    <property type="project" value="UniProtKB-UniRule"/>
</dbReference>
<dbReference type="GO" id="GO:0044209">
    <property type="term" value="P:AMP salvage"/>
    <property type="evidence" value="ECO:0007669"/>
    <property type="project" value="UniProtKB-UniRule"/>
</dbReference>
<dbReference type="CDD" id="cd01428">
    <property type="entry name" value="ADK"/>
    <property type="match status" value="1"/>
</dbReference>
<dbReference type="FunFam" id="3.40.50.300:FF:002170">
    <property type="entry name" value="Adenylate kinase"/>
    <property type="match status" value="1"/>
</dbReference>
<dbReference type="Gene3D" id="3.40.50.300">
    <property type="entry name" value="P-loop containing nucleotide triphosphate hydrolases"/>
    <property type="match status" value="1"/>
</dbReference>
<dbReference type="HAMAP" id="MF_00235">
    <property type="entry name" value="Adenylate_kinase_Adk"/>
    <property type="match status" value="1"/>
</dbReference>
<dbReference type="InterPro" id="IPR000850">
    <property type="entry name" value="Adenylat/UMP-CMP_kin"/>
</dbReference>
<dbReference type="InterPro" id="IPR033690">
    <property type="entry name" value="Adenylat_kinase_CS"/>
</dbReference>
<dbReference type="InterPro" id="IPR027417">
    <property type="entry name" value="P-loop_NTPase"/>
</dbReference>
<dbReference type="NCBIfam" id="NF001381">
    <property type="entry name" value="PRK00279.1-3"/>
    <property type="match status" value="1"/>
</dbReference>
<dbReference type="NCBIfam" id="NF011100">
    <property type="entry name" value="PRK14527.1"/>
    <property type="match status" value="1"/>
</dbReference>
<dbReference type="NCBIfam" id="NF011104">
    <property type="entry name" value="PRK14531.1"/>
    <property type="match status" value="1"/>
</dbReference>
<dbReference type="NCBIfam" id="NF011105">
    <property type="entry name" value="PRK14532.1"/>
    <property type="match status" value="1"/>
</dbReference>
<dbReference type="PANTHER" id="PTHR23359">
    <property type="entry name" value="NUCLEOTIDE KINASE"/>
    <property type="match status" value="1"/>
</dbReference>
<dbReference type="Pfam" id="PF00406">
    <property type="entry name" value="ADK"/>
    <property type="match status" value="1"/>
</dbReference>
<dbReference type="PRINTS" id="PR00094">
    <property type="entry name" value="ADENYLTKNASE"/>
</dbReference>
<dbReference type="SUPFAM" id="SSF52540">
    <property type="entry name" value="P-loop containing nucleoside triphosphate hydrolases"/>
    <property type="match status" value="1"/>
</dbReference>
<dbReference type="PROSITE" id="PS00113">
    <property type="entry name" value="ADENYLATE_KINASE"/>
    <property type="match status" value="1"/>
</dbReference>
<gene>
    <name evidence="1" type="primary">adk</name>
    <name type="ordered locus">MRA_0741</name>
</gene>
<evidence type="ECO:0000255" key="1">
    <source>
        <dbReference type="HAMAP-Rule" id="MF_00235"/>
    </source>
</evidence>
<sequence length="181" mass="20125">MRVLLLGPPGAGKGTQAVKLAEKLGIPQISTGELFRRNIEEGTKLGVEAKRYLDAGDLVPSDLTNELVDDRLNNPDAANGFILDGYPRSVEQAKALHEMLERRGTDIDAVLEFRVSEEVLLERLKGRGRADDTDDVILNRMKVYRDETAPLLEYYRDQLKTVDAVGTMDEVFARALRALGK</sequence>
<organism>
    <name type="scientific">Mycobacterium tuberculosis (strain ATCC 25177 / H37Ra)</name>
    <dbReference type="NCBI Taxonomy" id="419947"/>
    <lineage>
        <taxon>Bacteria</taxon>
        <taxon>Bacillati</taxon>
        <taxon>Actinomycetota</taxon>
        <taxon>Actinomycetes</taxon>
        <taxon>Mycobacteriales</taxon>
        <taxon>Mycobacteriaceae</taxon>
        <taxon>Mycobacterium</taxon>
        <taxon>Mycobacterium tuberculosis complex</taxon>
    </lineage>
</organism>
<accession>A5U0B9</accession>
<protein>
    <recommendedName>
        <fullName evidence="1">Adenylate kinase</fullName>
        <shortName evidence="1">AK</shortName>
        <ecNumber evidence="1">2.7.4.3</ecNumber>
    </recommendedName>
    <alternativeName>
        <fullName evidence="1">ATP-AMP transphosphorylase</fullName>
    </alternativeName>
    <alternativeName>
        <fullName evidence="1">ATP:AMP phosphotransferase</fullName>
    </alternativeName>
    <alternativeName>
        <fullName evidence="1">Adenylate monophosphate kinase</fullName>
    </alternativeName>
</protein>
<name>KAD_MYCTA</name>
<keyword id="KW-0067">ATP-binding</keyword>
<keyword id="KW-0963">Cytoplasm</keyword>
<keyword id="KW-0418">Kinase</keyword>
<keyword id="KW-0545">Nucleotide biosynthesis</keyword>
<keyword id="KW-0547">Nucleotide-binding</keyword>
<keyword id="KW-1185">Reference proteome</keyword>
<keyword id="KW-0808">Transferase</keyword>
<comment type="function">
    <text evidence="1">Catalyzes the reversible transfer of the terminal phosphate group between ATP and AMP. Plays an important role in cellular energy homeostasis and in adenine nucleotide metabolism.</text>
</comment>
<comment type="catalytic activity">
    <reaction evidence="1">
        <text>AMP + ATP = 2 ADP</text>
        <dbReference type="Rhea" id="RHEA:12973"/>
        <dbReference type="ChEBI" id="CHEBI:30616"/>
        <dbReference type="ChEBI" id="CHEBI:456215"/>
        <dbReference type="ChEBI" id="CHEBI:456216"/>
        <dbReference type="EC" id="2.7.4.3"/>
    </reaction>
</comment>
<comment type="pathway">
    <text evidence="1">Purine metabolism; AMP biosynthesis via salvage pathway; AMP from ADP: step 1/1.</text>
</comment>
<comment type="subunit">
    <text evidence="1">Monomer.</text>
</comment>
<comment type="subcellular location">
    <subcellularLocation>
        <location evidence="1">Cytoplasm</location>
    </subcellularLocation>
</comment>
<comment type="domain">
    <text evidence="1">Consists of three domains, a large central CORE domain and two small peripheral domains, NMPbind and LID, which undergo movements during catalysis. The LID domain closes over the site of phosphoryl transfer upon ATP binding. Assembling and dissambling the active center during each catalytic cycle provides an effective means to prevent ATP hydrolysis.</text>
</comment>
<comment type="similarity">
    <text evidence="1">Belongs to the adenylate kinase family.</text>
</comment>
<proteinExistence type="inferred from homology"/>